<name>EFEU_YERPS</name>
<protein>
    <recommendedName>
        <fullName>Ferrous iron permease EfeU</fullName>
    </recommendedName>
    <alternativeName>
        <fullName>Fe(2+) ion permease EfeU</fullName>
    </alternativeName>
    <alternativeName>
        <fullName>Ferrous iron uptake protein</fullName>
    </alternativeName>
</protein>
<dbReference type="EMBL" id="BX936398">
    <property type="protein sequence ID" value="CAH20964.1"/>
    <property type="molecule type" value="Genomic_DNA"/>
</dbReference>
<dbReference type="RefSeq" id="WP_011192192.1">
    <property type="nucleotide sequence ID" value="NC_006155.1"/>
</dbReference>
<dbReference type="SMR" id="Q66BP6"/>
<dbReference type="KEGG" id="yps:YPTB1725"/>
<dbReference type="Proteomes" id="UP000001011">
    <property type="component" value="Chromosome"/>
</dbReference>
<dbReference type="GO" id="GO:0033573">
    <property type="term" value="C:high-affinity iron permease complex"/>
    <property type="evidence" value="ECO:0007669"/>
    <property type="project" value="InterPro"/>
</dbReference>
<dbReference type="GO" id="GO:0015093">
    <property type="term" value="F:ferrous iron transmembrane transporter activity"/>
    <property type="evidence" value="ECO:0007669"/>
    <property type="project" value="TreeGrafter"/>
</dbReference>
<dbReference type="InterPro" id="IPR005217">
    <property type="entry name" value="EfeU/FTR1-like"/>
</dbReference>
<dbReference type="InterPro" id="IPR004923">
    <property type="entry name" value="FTR1/Fip1/EfeU"/>
</dbReference>
<dbReference type="NCBIfam" id="NF041756">
    <property type="entry name" value="EfeU"/>
    <property type="match status" value="1"/>
</dbReference>
<dbReference type="NCBIfam" id="TIGR00145">
    <property type="entry name" value="EfeU/Ftr1 family ferrous iron transporter subunit"/>
    <property type="match status" value="1"/>
</dbReference>
<dbReference type="PANTHER" id="PTHR31632">
    <property type="entry name" value="IRON TRANSPORTER FTH1"/>
    <property type="match status" value="1"/>
</dbReference>
<dbReference type="PANTHER" id="PTHR31632:SF2">
    <property type="entry name" value="PLASMA MEMBRANE IRON PERMEASE"/>
    <property type="match status" value="1"/>
</dbReference>
<dbReference type="Pfam" id="PF03239">
    <property type="entry name" value="FTR1"/>
    <property type="match status" value="1"/>
</dbReference>
<gene>
    <name type="primary">efeU</name>
    <name type="ordered locus">YPTB1725</name>
</gene>
<evidence type="ECO:0000250" key="1"/>
<evidence type="ECO:0000255" key="2"/>
<evidence type="ECO:0000305" key="3"/>
<feature type="chain" id="PRO_0000277552" description="Ferrous iron permease EfeU">
    <location>
        <begin position="1"/>
        <end position="285"/>
    </location>
</feature>
<feature type="topological domain" description="Periplasmic" evidence="2">
    <location>
        <begin position="1"/>
        <end position="4"/>
    </location>
</feature>
<feature type="transmembrane region" description="Helical" evidence="2">
    <location>
        <begin position="5"/>
        <end position="25"/>
    </location>
</feature>
<feature type="topological domain" description="Cytoplasmic" evidence="2">
    <location>
        <begin position="26"/>
        <end position="38"/>
    </location>
</feature>
<feature type="transmembrane region" description="Helical" evidence="2">
    <location>
        <begin position="39"/>
        <end position="59"/>
    </location>
</feature>
<feature type="topological domain" description="Periplasmic" evidence="2">
    <location>
        <begin position="60"/>
        <end position="72"/>
    </location>
</feature>
<feature type="transmembrane region" description="Helical" evidence="2">
    <location>
        <begin position="73"/>
        <end position="93"/>
    </location>
</feature>
<feature type="topological domain" description="Cytoplasmic" evidence="2">
    <location>
        <begin position="94"/>
        <end position="121"/>
    </location>
</feature>
<feature type="transmembrane region" description="Helical" evidence="2">
    <location>
        <begin position="122"/>
        <end position="142"/>
    </location>
</feature>
<feature type="topological domain" description="Periplasmic" evidence="2">
    <location>
        <begin position="143"/>
        <end position="150"/>
    </location>
</feature>
<feature type="transmembrane region" description="Helical" evidence="2">
    <location>
        <begin position="151"/>
        <end position="171"/>
    </location>
</feature>
<feature type="topological domain" description="Cytoplasmic" evidence="2">
    <location>
        <begin position="172"/>
        <end position="182"/>
    </location>
</feature>
<feature type="transmembrane region" description="Helical" evidence="2">
    <location>
        <begin position="183"/>
        <end position="203"/>
    </location>
</feature>
<feature type="topological domain" description="Periplasmic" evidence="2">
    <location>
        <begin position="204"/>
        <end position="247"/>
    </location>
</feature>
<feature type="transmembrane region" description="Helical" evidence="2">
    <location>
        <begin position="248"/>
        <end position="268"/>
    </location>
</feature>
<feature type="topological domain" description="Cytoplasmic" evidence="2">
    <location>
        <begin position="269"/>
        <end position="285"/>
    </location>
</feature>
<accession>Q66BP6</accession>
<sequence length="285" mass="31024">MFSTFVPFLIMFREGLEAALIVSLIASYLKRTQRGQWMGAVWVGVVVAAVLCLAIGIFINETTGEFPQKQQELFEGIIAVVAVCILTYMVFWMRKVSKSVKVHLEGAIDNALNSGRGQGWALVAMVFFAVAREGLESVFFLLAAFQQDVGIGAPIGAILGLVCAILVGMAIYWGGVKLHLAKFFKWTSLFILFVAAGLAAGAIRAFHEAGLWNHFQDIAFDLTDVLSTHSLLGTFLEGMFGYQEAPTVSEVSVYFIYLIPALILFFLPPRSTAGSAIAAARKINP</sequence>
<keyword id="KW-0997">Cell inner membrane</keyword>
<keyword id="KW-1003">Cell membrane</keyword>
<keyword id="KW-0406">Ion transport</keyword>
<keyword id="KW-0408">Iron</keyword>
<keyword id="KW-0410">Iron transport</keyword>
<keyword id="KW-0472">Membrane</keyword>
<keyword id="KW-0812">Transmembrane</keyword>
<keyword id="KW-1133">Transmembrane helix</keyword>
<keyword id="KW-0813">Transport</keyword>
<comment type="function">
    <text evidence="1">Uptake of Fe(2+) ions across the membrane.</text>
</comment>
<comment type="subunit">
    <text evidence="1">Part of a ferrous iron transporter composed of EfeU, EfeO and EfeB.</text>
</comment>
<comment type="subcellular location">
    <subcellularLocation>
        <location evidence="1">Cell inner membrane</location>
        <topology evidence="1">Multi-pass membrane protein</topology>
    </subcellularLocation>
</comment>
<comment type="similarity">
    <text evidence="3">Belongs to the oxidase-dependent Fe transporter (OFeT) (TC 9.A.10.1) family.</text>
</comment>
<organism>
    <name type="scientific">Yersinia pseudotuberculosis serotype I (strain IP32953)</name>
    <dbReference type="NCBI Taxonomy" id="273123"/>
    <lineage>
        <taxon>Bacteria</taxon>
        <taxon>Pseudomonadati</taxon>
        <taxon>Pseudomonadota</taxon>
        <taxon>Gammaproteobacteria</taxon>
        <taxon>Enterobacterales</taxon>
        <taxon>Yersiniaceae</taxon>
        <taxon>Yersinia</taxon>
    </lineage>
</organism>
<proteinExistence type="inferred from homology"/>
<reference key="1">
    <citation type="journal article" date="2004" name="Proc. Natl. Acad. Sci. U.S.A.">
        <title>Insights into the evolution of Yersinia pestis through whole-genome comparison with Yersinia pseudotuberculosis.</title>
        <authorList>
            <person name="Chain P.S.G."/>
            <person name="Carniel E."/>
            <person name="Larimer F.W."/>
            <person name="Lamerdin J."/>
            <person name="Stoutland P.O."/>
            <person name="Regala W.M."/>
            <person name="Georgescu A.M."/>
            <person name="Vergez L.M."/>
            <person name="Land M.L."/>
            <person name="Motin V.L."/>
            <person name="Brubaker R.R."/>
            <person name="Fowler J."/>
            <person name="Hinnebusch J."/>
            <person name="Marceau M."/>
            <person name="Medigue C."/>
            <person name="Simonet M."/>
            <person name="Chenal-Francisque V."/>
            <person name="Souza B."/>
            <person name="Dacheux D."/>
            <person name="Elliott J.M."/>
            <person name="Derbise A."/>
            <person name="Hauser L.J."/>
            <person name="Garcia E."/>
        </authorList>
    </citation>
    <scope>NUCLEOTIDE SEQUENCE [LARGE SCALE GENOMIC DNA]</scope>
    <source>
        <strain>IP32953</strain>
    </source>
</reference>